<keyword id="KW-1185">Reference proteome</keyword>
<gene>
    <name type="ORF">DDB_G0286943</name>
</gene>
<feature type="chain" id="PRO_0000347045" description="Uncharacterized protein DDB_G0286943">
    <location>
        <begin position="1"/>
        <end position="51"/>
    </location>
</feature>
<protein>
    <recommendedName>
        <fullName>Uncharacterized protein DDB_G0286943</fullName>
    </recommendedName>
</protein>
<proteinExistence type="predicted"/>
<name>Y7203_DICDI</name>
<reference key="1">
    <citation type="journal article" date="2005" name="Nature">
        <title>The genome of the social amoeba Dictyostelium discoideum.</title>
        <authorList>
            <person name="Eichinger L."/>
            <person name="Pachebat J.A."/>
            <person name="Gloeckner G."/>
            <person name="Rajandream M.A."/>
            <person name="Sucgang R."/>
            <person name="Berriman M."/>
            <person name="Song J."/>
            <person name="Olsen R."/>
            <person name="Szafranski K."/>
            <person name="Xu Q."/>
            <person name="Tunggal B."/>
            <person name="Kummerfeld S."/>
            <person name="Madera M."/>
            <person name="Konfortov B.A."/>
            <person name="Rivero F."/>
            <person name="Bankier A.T."/>
            <person name="Lehmann R."/>
            <person name="Hamlin N."/>
            <person name="Davies R."/>
            <person name="Gaudet P."/>
            <person name="Fey P."/>
            <person name="Pilcher K."/>
            <person name="Chen G."/>
            <person name="Saunders D."/>
            <person name="Sodergren E.J."/>
            <person name="Davis P."/>
            <person name="Kerhornou A."/>
            <person name="Nie X."/>
            <person name="Hall N."/>
            <person name="Anjard C."/>
            <person name="Hemphill L."/>
            <person name="Bason N."/>
            <person name="Farbrother P."/>
            <person name="Desany B."/>
            <person name="Just E."/>
            <person name="Morio T."/>
            <person name="Rost R."/>
            <person name="Churcher C.M."/>
            <person name="Cooper J."/>
            <person name="Haydock S."/>
            <person name="van Driessche N."/>
            <person name="Cronin A."/>
            <person name="Goodhead I."/>
            <person name="Muzny D.M."/>
            <person name="Mourier T."/>
            <person name="Pain A."/>
            <person name="Lu M."/>
            <person name="Harper D."/>
            <person name="Lindsay R."/>
            <person name="Hauser H."/>
            <person name="James K.D."/>
            <person name="Quiles M."/>
            <person name="Madan Babu M."/>
            <person name="Saito T."/>
            <person name="Buchrieser C."/>
            <person name="Wardroper A."/>
            <person name="Felder M."/>
            <person name="Thangavelu M."/>
            <person name="Johnson D."/>
            <person name="Knights A."/>
            <person name="Loulseged H."/>
            <person name="Mungall K.L."/>
            <person name="Oliver K."/>
            <person name="Price C."/>
            <person name="Quail M.A."/>
            <person name="Urushihara H."/>
            <person name="Hernandez J."/>
            <person name="Rabbinowitsch E."/>
            <person name="Steffen D."/>
            <person name="Sanders M."/>
            <person name="Ma J."/>
            <person name="Kohara Y."/>
            <person name="Sharp S."/>
            <person name="Simmonds M.N."/>
            <person name="Spiegler S."/>
            <person name="Tivey A."/>
            <person name="Sugano S."/>
            <person name="White B."/>
            <person name="Walker D."/>
            <person name="Woodward J.R."/>
            <person name="Winckler T."/>
            <person name="Tanaka Y."/>
            <person name="Shaulsky G."/>
            <person name="Schleicher M."/>
            <person name="Weinstock G.M."/>
            <person name="Rosenthal A."/>
            <person name="Cox E.C."/>
            <person name="Chisholm R.L."/>
            <person name="Gibbs R.A."/>
            <person name="Loomis W.F."/>
            <person name="Platzer M."/>
            <person name="Kay R.R."/>
            <person name="Williams J.G."/>
            <person name="Dear P.H."/>
            <person name="Noegel A.A."/>
            <person name="Barrell B.G."/>
            <person name="Kuspa A."/>
        </authorList>
    </citation>
    <scope>NUCLEOTIDE SEQUENCE [LARGE SCALE GENOMIC DNA]</scope>
    <source>
        <strain>AX4</strain>
    </source>
</reference>
<organism>
    <name type="scientific">Dictyostelium discoideum</name>
    <name type="common">Social amoeba</name>
    <dbReference type="NCBI Taxonomy" id="44689"/>
    <lineage>
        <taxon>Eukaryota</taxon>
        <taxon>Amoebozoa</taxon>
        <taxon>Evosea</taxon>
        <taxon>Eumycetozoa</taxon>
        <taxon>Dictyostelia</taxon>
        <taxon>Dictyosteliales</taxon>
        <taxon>Dictyosteliaceae</taxon>
        <taxon>Dictyostelium</taxon>
    </lineage>
</organism>
<accession>Q54L25</accession>
<sequence>MGNAPSRTEPTCDNSINFIIPKENKSYQCYPEQVESNPIDSINSVYFYKTT</sequence>
<dbReference type="EMBL" id="AAFI02000092">
    <property type="protein sequence ID" value="EAL63969.1"/>
    <property type="molecule type" value="Genomic_DNA"/>
</dbReference>
<dbReference type="RefSeq" id="XP_637478.1">
    <property type="nucleotide sequence ID" value="XM_632386.1"/>
</dbReference>
<dbReference type="PaxDb" id="44689-DDB0305129"/>
<dbReference type="EnsemblProtists" id="EAL63969">
    <property type="protein sequence ID" value="EAL63969"/>
    <property type="gene ID" value="DDB_G0286943"/>
</dbReference>
<dbReference type="GeneID" id="8625877"/>
<dbReference type="KEGG" id="ddi:DDB_G0286943"/>
<dbReference type="dictyBase" id="DDB_G0286943"/>
<dbReference type="VEuPathDB" id="AmoebaDB:DDB_G0286943"/>
<dbReference type="HOGENOM" id="CLU_3110400_0_0_1"/>
<dbReference type="InParanoid" id="Q54L25"/>
<dbReference type="PRO" id="PR:Q54L25"/>
<dbReference type="Proteomes" id="UP000002195">
    <property type="component" value="Chromosome 4"/>
</dbReference>